<reference key="1">
    <citation type="journal article" date="2002" name="Science">
        <title>50 million years of genomic stasis in endosymbiotic bacteria.</title>
        <authorList>
            <person name="Tamas I."/>
            <person name="Klasson L."/>
            <person name="Canbaeck B."/>
            <person name="Naeslund A.K."/>
            <person name="Eriksson A.-S."/>
            <person name="Wernegreen J.J."/>
            <person name="Sandstroem J.P."/>
            <person name="Moran N.A."/>
            <person name="Andersson S.G.E."/>
        </authorList>
    </citation>
    <scope>NUCLEOTIDE SEQUENCE [LARGE SCALE GENOMIC DNA]</scope>
    <source>
        <strain>Sg</strain>
    </source>
</reference>
<feature type="chain" id="PRO_0000133728" description="Large ribosomal subunit protein uL13">
    <location>
        <begin position="1"/>
        <end position="142"/>
    </location>
</feature>
<evidence type="ECO:0000255" key="1">
    <source>
        <dbReference type="HAMAP-Rule" id="MF_01366"/>
    </source>
</evidence>
<evidence type="ECO:0000305" key="2"/>
<sequence length="142" mass="16317">MKTFSLKLNDIKRNWFYVDATNKILGRFASAISIRLRGKHKIEYTPHLDTGDYIIVLNASKILVTGQKKINKVYYHHTGYIGGIKQLRFEEIMLKNPAKVIEIAVKGMLPKGSLGRSMFKKLKVFSNENHDHIAQCPQFLNI</sequence>
<proteinExistence type="inferred from homology"/>
<name>RL13_BUCAP</name>
<comment type="function">
    <text evidence="1">This protein is one of the early assembly proteins of the 50S ribosomal subunit, although it is not seen to bind rRNA by itself. It is important during the early stages of 50S assembly.</text>
</comment>
<comment type="subunit">
    <text evidence="1">Part of the 50S ribosomal subunit.</text>
</comment>
<comment type="similarity">
    <text evidence="1">Belongs to the universal ribosomal protein uL13 family.</text>
</comment>
<dbReference type="EMBL" id="AE013218">
    <property type="protein sequence ID" value="AAM67930.1"/>
    <property type="molecule type" value="Genomic_DNA"/>
</dbReference>
<dbReference type="RefSeq" id="WP_044006056.1">
    <property type="nucleotide sequence ID" value="NC_004061.1"/>
</dbReference>
<dbReference type="SMR" id="Q8K9F9"/>
<dbReference type="STRING" id="198804.BUsg_378"/>
<dbReference type="GeneID" id="93003848"/>
<dbReference type="KEGG" id="bas:BUsg_378"/>
<dbReference type="eggNOG" id="COG0102">
    <property type="taxonomic scope" value="Bacteria"/>
</dbReference>
<dbReference type="HOGENOM" id="CLU_082184_2_2_6"/>
<dbReference type="Proteomes" id="UP000000416">
    <property type="component" value="Chromosome"/>
</dbReference>
<dbReference type="GO" id="GO:0022625">
    <property type="term" value="C:cytosolic large ribosomal subunit"/>
    <property type="evidence" value="ECO:0007669"/>
    <property type="project" value="TreeGrafter"/>
</dbReference>
<dbReference type="GO" id="GO:0003729">
    <property type="term" value="F:mRNA binding"/>
    <property type="evidence" value="ECO:0007669"/>
    <property type="project" value="TreeGrafter"/>
</dbReference>
<dbReference type="GO" id="GO:0003735">
    <property type="term" value="F:structural constituent of ribosome"/>
    <property type="evidence" value="ECO:0007669"/>
    <property type="project" value="InterPro"/>
</dbReference>
<dbReference type="GO" id="GO:0017148">
    <property type="term" value="P:negative regulation of translation"/>
    <property type="evidence" value="ECO:0007669"/>
    <property type="project" value="TreeGrafter"/>
</dbReference>
<dbReference type="GO" id="GO:0006412">
    <property type="term" value="P:translation"/>
    <property type="evidence" value="ECO:0007669"/>
    <property type="project" value="UniProtKB-UniRule"/>
</dbReference>
<dbReference type="CDD" id="cd00392">
    <property type="entry name" value="Ribosomal_L13"/>
    <property type="match status" value="1"/>
</dbReference>
<dbReference type="FunFam" id="3.90.1180.10:FF:000001">
    <property type="entry name" value="50S ribosomal protein L13"/>
    <property type="match status" value="1"/>
</dbReference>
<dbReference type="Gene3D" id="3.90.1180.10">
    <property type="entry name" value="Ribosomal protein L13"/>
    <property type="match status" value="1"/>
</dbReference>
<dbReference type="HAMAP" id="MF_01366">
    <property type="entry name" value="Ribosomal_uL13"/>
    <property type="match status" value="1"/>
</dbReference>
<dbReference type="InterPro" id="IPR005822">
    <property type="entry name" value="Ribosomal_uL13"/>
</dbReference>
<dbReference type="InterPro" id="IPR005823">
    <property type="entry name" value="Ribosomal_uL13_bac-type"/>
</dbReference>
<dbReference type="InterPro" id="IPR023563">
    <property type="entry name" value="Ribosomal_uL13_CS"/>
</dbReference>
<dbReference type="InterPro" id="IPR036899">
    <property type="entry name" value="Ribosomal_uL13_sf"/>
</dbReference>
<dbReference type="NCBIfam" id="TIGR01066">
    <property type="entry name" value="rplM_bact"/>
    <property type="match status" value="1"/>
</dbReference>
<dbReference type="PANTHER" id="PTHR11545:SF2">
    <property type="entry name" value="LARGE RIBOSOMAL SUBUNIT PROTEIN UL13M"/>
    <property type="match status" value="1"/>
</dbReference>
<dbReference type="PANTHER" id="PTHR11545">
    <property type="entry name" value="RIBOSOMAL PROTEIN L13"/>
    <property type="match status" value="1"/>
</dbReference>
<dbReference type="Pfam" id="PF00572">
    <property type="entry name" value="Ribosomal_L13"/>
    <property type="match status" value="1"/>
</dbReference>
<dbReference type="PIRSF" id="PIRSF002181">
    <property type="entry name" value="Ribosomal_L13"/>
    <property type="match status" value="1"/>
</dbReference>
<dbReference type="SUPFAM" id="SSF52161">
    <property type="entry name" value="Ribosomal protein L13"/>
    <property type="match status" value="1"/>
</dbReference>
<dbReference type="PROSITE" id="PS00783">
    <property type="entry name" value="RIBOSOMAL_L13"/>
    <property type="match status" value="1"/>
</dbReference>
<organism>
    <name type="scientific">Buchnera aphidicola subsp. Schizaphis graminum (strain Sg)</name>
    <dbReference type="NCBI Taxonomy" id="198804"/>
    <lineage>
        <taxon>Bacteria</taxon>
        <taxon>Pseudomonadati</taxon>
        <taxon>Pseudomonadota</taxon>
        <taxon>Gammaproteobacteria</taxon>
        <taxon>Enterobacterales</taxon>
        <taxon>Erwiniaceae</taxon>
        <taxon>Buchnera</taxon>
    </lineage>
</organism>
<accession>Q8K9F9</accession>
<protein>
    <recommendedName>
        <fullName evidence="1">Large ribosomal subunit protein uL13</fullName>
    </recommendedName>
    <alternativeName>
        <fullName evidence="2">50S ribosomal protein L13</fullName>
    </alternativeName>
</protein>
<gene>
    <name evidence="1" type="primary">rplM</name>
    <name type="ordered locus">BUsg_378</name>
</gene>
<keyword id="KW-0687">Ribonucleoprotein</keyword>
<keyword id="KW-0689">Ribosomal protein</keyword>